<name>COMD2_HUMAN</name>
<gene>
    <name type="primary">COMMD2</name>
    <name type="ORF">HSPC042</name>
    <name type="ORF">My004</name>
</gene>
<organism>
    <name type="scientific">Homo sapiens</name>
    <name type="common">Human</name>
    <dbReference type="NCBI Taxonomy" id="9606"/>
    <lineage>
        <taxon>Eukaryota</taxon>
        <taxon>Metazoa</taxon>
        <taxon>Chordata</taxon>
        <taxon>Craniata</taxon>
        <taxon>Vertebrata</taxon>
        <taxon>Euteleostomi</taxon>
        <taxon>Mammalia</taxon>
        <taxon>Eutheria</taxon>
        <taxon>Euarchontoglires</taxon>
        <taxon>Primates</taxon>
        <taxon>Haplorrhini</taxon>
        <taxon>Catarrhini</taxon>
        <taxon>Hominidae</taxon>
        <taxon>Homo</taxon>
    </lineage>
</organism>
<sequence length="199" mass="22745">MLLELSEEHKEHLAFLPQVDSAVVAEFGRIAVEFLRRGANPKIYEGAARKLNVSSDTVQHGVEGLTYLLTESSKLMISELDFQDSVFVLGFSEELNKLLLQLYLDNRKEIRTILSELAPSLPSYHNLEWRLDVQLASRSLRQQIKPAVTIKLHLNQNGDHNTKVLQTDPATLLHLVQQLEQALEEMKTNHCRRVVRNIK</sequence>
<proteinExistence type="evidence at protein level"/>
<keyword id="KW-0002">3D-structure</keyword>
<keyword id="KW-0025">Alternative splicing</keyword>
<keyword id="KW-0963">Cytoplasm</keyword>
<keyword id="KW-1267">Proteomics identification</keyword>
<keyword id="KW-1185">Reference proteome</keyword>
<keyword id="KW-0804">Transcription</keyword>
<keyword id="KW-0805">Transcription regulation</keyword>
<keyword id="KW-0833">Ubl conjugation pathway</keyword>
<dbReference type="EMBL" id="AY542158">
    <property type="protein sequence ID" value="AAS22240.1"/>
    <property type="molecule type" value="mRNA"/>
</dbReference>
<dbReference type="EMBL" id="AF059618">
    <property type="protein sequence ID" value="AAG43117.1"/>
    <property type="molecule type" value="mRNA"/>
</dbReference>
<dbReference type="EMBL" id="AF125096">
    <property type="protein sequence ID" value="AAD39913.1"/>
    <property type="status" value="ALT_FRAME"/>
    <property type="molecule type" value="mRNA"/>
</dbReference>
<dbReference type="EMBL" id="BC046131">
    <property type="protein sequence ID" value="AAH46131.1"/>
    <property type="molecule type" value="mRNA"/>
</dbReference>
<dbReference type="EMBL" id="BC093077">
    <property type="protein sequence ID" value="AAH93077.1"/>
    <property type="molecule type" value="mRNA"/>
</dbReference>
<dbReference type="CCDS" id="CCDS3145.1">
    <molecule id="Q86X83-1"/>
</dbReference>
<dbReference type="RefSeq" id="NP_057178.2">
    <molecule id="Q86X83-1"/>
    <property type="nucleotide sequence ID" value="NM_016094.3"/>
</dbReference>
<dbReference type="PDB" id="8F2R">
    <property type="method" value="EM"/>
    <property type="resolution" value="3.12 A"/>
    <property type="chains" value="B=1-199"/>
</dbReference>
<dbReference type="PDB" id="8F2U">
    <property type="method" value="EM"/>
    <property type="resolution" value="3.53 A"/>
    <property type="chains" value="B=1-199"/>
</dbReference>
<dbReference type="PDB" id="8P0W">
    <property type="method" value="EM"/>
    <property type="resolution" value="2.90 A"/>
    <property type="chains" value="B=1-199"/>
</dbReference>
<dbReference type="PDBsum" id="8F2R"/>
<dbReference type="PDBsum" id="8F2U"/>
<dbReference type="PDBsum" id="8P0W"/>
<dbReference type="EMDB" id="EMD-17340"/>
<dbReference type="EMDB" id="EMD-17342"/>
<dbReference type="EMDB" id="EMD-28825"/>
<dbReference type="EMDB" id="EMD-28827"/>
<dbReference type="SMR" id="Q86X83"/>
<dbReference type="BioGRID" id="119309">
    <property type="interactions" value="90"/>
</dbReference>
<dbReference type="ComplexPortal" id="CPX-2211">
    <property type="entry name" value="Commander complex"/>
</dbReference>
<dbReference type="CORUM" id="Q86X83"/>
<dbReference type="FunCoup" id="Q86X83">
    <property type="interactions" value="2823"/>
</dbReference>
<dbReference type="IntAct" id="Q86X83">
    <property type="interactions" value="72"/>
</dbReference>
<dbReference type="STRING" id="9606.ENSP00000419475"/>
<dbReference type="GlyGen" id="Q86X83">
    <property type="glycosylation" value="1 site, 1 O-linked glycan (1 site)"/>
</dbReference>
<dbReference type="iPTMnet" id="Q86X83"/>
<dbReference type="PhosphoSitePlus" id="Q86X83"/>
<dbReference type="BioMuta" id="COMMD2"/>
<dbReference type="DMDM" id="116241310"/>
<dbReference type="jPOST" id="Q86X83"/>
<dbReference type="MassIVE" id="Q86X83"/>
<dbReference type="PaxDb" id="9606-ENSP00000419475"/>
<dbReference type="PeptideAtlas" id="Q86X83"/>
<dbReference type="ProteomicsDB" id="70254">
    <molecule id="Q86X83-1"/>
</dbReference>
<dbReference type="Pumba" id="Q86X83"/>
<dbReference type="TopDownProteomics" id="Q86X83-1">
    <molecule id="Q86X83-1"/>
</dbReference>
<dbReference type="Antibodypedia" id="48056">
    <property type="antibodies" value="49 antibodies from 14 providers"/>
</dbReference>
<dbReference type="DNASU" id="51122"/>
<dbReference type="Ensembl" id="ENST00000473414.6">
    <molecule id="Q86X83-1"/>
    <property type="protein sequence ID" value="ENSP00000419475.1"/>
    <property type="gene ID" value="ENSG00000114744.9"/>
</dbReference>
<dbReference type="GeneID" id="51122"/>
<dbReference type="KEGG" id="hsa:51122"/>
<dbReference type="MANE-Select" id="ENST00000473414.6">
    <property type="protein sequence ID" value="ENSP00000419475.1"/>
    <property type="RefSeq nucleotide sequence ID" value="NM_016094.4"/>
    <property type="RefSeq protein sequence ID" value="NP_057178.2"/>
</dbReference>
<dbReference type="UCSC" id="uc003exj.2">
    <molecule id="Q86X83-1"/>
    <property type="organism name" value="human"/>
</dbReference>
<dbReference type="AGR" id="HGNC:24993"/>
<dbReference type="CTD" id="51122"/>
<dbReference type="DisGeNET" id="51122"/>
<dbReference type="GeneCards" id="COMMD2"/>
<dbReference type="HGNC" id="HGNC:24993">
    <property type="gene designation" value="COMMD2"/>
</dbReference>
<dbReference type="HPA" id="ENSG00000114744">
    <property type="expression patterns" value="Low tissue specificity"/>
</dbReference>
<dbReference type="MIM" id="616699">
    <property type="type" value="gene"/>
</dbReference>
<dbReference type="neXtProt" id="NX_Q86X83"/>
<dbReference type="OpenTargets" id="ENSG00000114744"/>
<dbReference type="PharmGKB" id="PA134923363"/>
<dbReference type="VEuPathDB" id="HostDB:ENSG00000114744"/>
<dbReference type="eggNOG" id="ENOG502QU0W">
    <property type="taxonomic scope" value="Eukaryota"/>
</dbReference>
<dbReference type="GeneTree" id="ENSGT00390000008489"/>
<dbReference type="InParanoid" id="Q86X83"/>
<dbReference type="OMA" id="NGDHNTQ"/>
<dbReference type="OrthoDB" id="10257479at2759"/>
<dbReference type="PAN-GO" id="Q86X83">
    <property type="GO annotations" value="0 GO annotations based on evolutionary models"/>
</dbReference>
<dbReference type="PhylomeDB" id="Q86X83"/>
<dbReference type="TreeFam" id="TF323519"/>
<dbReference type="PathwayCommons" id="Q86X83"/>
<dbReference type="Reactome" id="R-HSA-8951664">
    <property type="pathway name" value="Neddylation"/>
</dbReference>
<dbReference type="SignaLink" id="Q86X83"/>
<dbReference type="BioGRID-ORCS" id="51122">
    <property type="hits" value="48 hits in 1173 CRISPR screens"/>
</dbReference>
<dbReference type="ChiTaRS" id="COMMD2">
    <property type="organism name" value="human"/>
</dbReference>
<dbReference type="GenomeRNAi" id="51122"/>
<dbReference type="Pharos" id="Q86X83">
    <property type="development level" value="Tdark"/>
</dbReference>
<dbReference type="PRO" id="PR:Q86X83"/>
<dbReference type="Proteomes" id="UP000005640">
    <property type="component" value="Chromosome 3"/>
</dbReference>
<dbReference type="RNAct" id="Q86X83">
    <property type="molecule type" value="protein"/>
</dbReference>
<dbReference type="Bgee" id="ENSG00000114744">
    <property type="expression patterns" value="Expressed in secondary oocyte and 193 other cell types or tissues"/>
</dbReference>
<dbReference type="ExpressionAtlas" id="Q86X83">
    <property type="expression patterns" value="baseline and differential"/>
</dbReference>
<dbReference type="GO" id="GO:0005737">
    <property type="term" value="C:cytoplasm"/>
    <property type="evidence" value="ECO:0007669"/>
    <property type="project" value="UniProtKB-SubCell"/>
</dbReference>
<dbReference type="CDD" id="cd04750">
    <property type="entry name" value="Commd2"/>
    <property type="match status" value="1"/>
</dbReference>
<dbReference type="InterPro" id="IPR017920">
    <property type="entry name" value="COMM"/>
</dbReference>
<dbReference type="InterPro" id="IPR037354">
    <property type="entry name" value="Commd2"/>
</dbReference>
<dbReference type="PANTHER" id="PTHR15857">
    <property type="entry name" value="COMM DOMAIN CONTAINING PROTEIN 2"/>
    <property type="match status" value="1"/>
</dbReference>
<dbReference type="PANTHER" id="PTHR15857:SF0">
    <property type="entry name" value="COMM DOMAIN-CONTAINING PROTEIN 2"/>
    <property type="match status" value="1"/>
</dbReference>
<dbReference type="Pfam" id="PF07258">
    <property type="entry name" value="COMM_domain"/>
    <property type="match status" value="1"/>
</dbReference>
<dbReference type="Pfam" id="PF21672">
    <property type="entry name" value="COMM_HN"/>
    <property type="match status" value="1"/>
</dbReference>
<dbReference type="PROSITE" id="PS51269">
    <property type="entry name" value="COMM"/>
    <property type="match status" value="1"/>
</dbReference>
<reference key="1">
    <citation type="journal article" date="2005" name="J. Biol. Chem.">
        <title>COMMD proteins, a novel family of structural and functional homologs of MURR1.</title>
        <authorList>
            <person name="Burstein E."/>
            <person name="Hoberg J.E."/>
            <person name="Wilkinson A.S."/>
            <person name="Rumble J.M."/>
            <person name="Csomos R.A."/>
            <person name="Komarck C.M."/>
            <person name="Maine G.N."/>
            <person name="Wilkinson J.C."/>
            <person name="Mayo M.W."/>
            <person name="Duckett C.S."/>
        </authorList>
    </citation>
    <scope>NUCLEOTIDE SEQUENCE [MRNA] (ISOFORM 1)</scope>
    <scope>FUNCTION</scope>
    <scope>INTERACTION WITH COMMD1; RELA; RELB; NFKB1 AND NFKB2</scope>
    <scope>TISSUE SPECIFICITY</scope>
    <scope>VARIANT LEU-113</scope>
</reference>
<reference key="2">
    <citation type="submission" date="1998-04" db="EMBL/GenBank/DDBJ databases">
        <authorList>
            <person name="Mao Y.M."/>
            <person name="Xie Y."/>
            <person name="Zhou Z.X."/>
        </authorList>
    </citation>
    <scope>NUCLEOTIDE SEQUENCE [LARGE SCALE MRNA] (ISOFORM 1)</scope>
    <source>
        <tissue>Fetal brain</tissue>
    </source>
</reference>
<reference key="3">
    <citation type="journal article" date="2000" name="Genome Res.">
        <title>Cloning and functional analysis of cDNAs with open reading frames for 300 previously undefined genes expressed in CD34+ hematopoietic stem/progenitor cells.</title>
        <authorList>
            <person name="Zhang Q.-H."/>
            <person name="Ye M."/>
            <person name="Wu X.-Y."/>
            <person name="Ren S.-X."/>
            <person name="Zhao M."/>
            <person name="Zhao C.-J."/>
            <person name="Fu G."/>
            <person name="Shen Y."/>
            <person name="Fan H.-Y."/>
            <person name="Lu G."/>
            <person name="Zhong M."/>
            <person name="Xu X.-R."/>
            <person name="Han Z.-G."/>
            <person name="Zhang J.-W."/>
            <person name="Tao J."/>
            <person name="Huang Q.-H."/>
            <person name="Zhou J."/>
            <person name="Hu G.-X."/>
            <person name="Gu J."/>
            <person name="Chen S.-J."/>
            <person name="Chen Z."/>
        </authorList>
    </citation>
    <scope>NUCLEOTIDE SEQUENCE [LARGE SCALE MRNA] (ISOFORM 1)</scope>
    <scope>VARIANT LEU-113</scope>
    <source>
        <tissue>Umbilical cord blood</tissue>
    </source>
</reference>
<reference key="4">
    <citation type="journal article" date="2004" name="Genome Res.">
        <title>The status, quality, and expansion of the NIH full-length cDNA project: the Mammalian Gene Collection (MGC).</title>
        <authorList>
            <consortium name="The MGC Project Team"/>
        </authorList>
    </citation>
    <scope>NUCLEOTIDE SEQUENCE [LARGE SCALE MRNA] (ISOFORMS 1 AND 2)</scope>
    <scope>VARIANT LEU-113</scope>
    <source>
        <tissue>Liver</tissue>
    </source>
</reference>
<reference key="5">
    <citation type="journal article" date="2011" name="J. Biol. Chem.">
        <title>COMMD1 (copper metabolism MURR1 domain-containing protein 1) regulates Cullin RING ligases by preventing CAND1 (Cullin-associated Nedd8-dissociated protein 1) binding.</title>
        <authorList>
            <person name="Mao X."/>
            <person name="Gluck N."/>
            <person name="Chen B."/>
            <person name="Starokadomskyy P."/>
            <person name="Li H."/>
            <person name="Maine G.N."/>
            <person name="Burstein E."/>
        </authorList>
    </citation>
    <scope>FUNCTION</scope>
    <scope>INTERACTION WITH CUL3; CUL4B; CUL5 AND CUL7</scope>
    <scope>SUBCELLULAR LOCATION</scope>
</reference>
<reference key="6">
    <citation type="journal article" date="2013" name="Am. J. Physiol.">
        <title>Functional interaction of COMMD3 and COMMD9 with the epithelial sodium channel.</title>
        <authorList>
            <person name="Liu Y.F."/>
            <person name="Swart M."/>
            <person name="Ke Y."/>
            <person name="Ly K."/>
            <person name="McDonald F.J."/>
        </authorList>
    </citation>
    <scope>INTERACTION WITH SCNN1B</scope>
</reference>
<reference key="7">
    <citation type="journal article" date="2013" name="J. Clin. Invest.">
        <title>CCDC22 deficiency in humans blunts activation of proinflammatory NF-kappaB signaling.</title>
        <authorList>
            <person name="Starokadomskyy P."/>
            <person name="Gluck N."/>
            <person name="Li H."/>
            <person name="Chen B."/>
            <person name="Wallis M."/>
            <person name="Maine G.N."/>
            <person name="Mao X."/>
            <person name="Zaidi I.W."/>
            <person name="Hein M.Y."/>
            <person name="McDonald F.J."/>
            <person name="Lenzner S."/>
            <person name="Zecha A."/>
            <person name="Ropers H.H."/>
            <person name="Kuss A.W."/>
            <person name="McGaughran J."/>
            <person name="Gecz J."/>
            <person name="Burstein E."/>
        </authorList>
    </citation>
    <scope>INTERACTION WITH CCDC22</scope>
</reference>
<reference key="8">
    <citation type="journal article" date="2015" name="Mol. Biol. Cell">
        <title>COMMD1 is linked to the WASH complex and regulates endosomal trafficking of the copper transporter ATP7A.</title>
        <authorList>
            <person name="Phillips-Krawczak C.A."/>
            <person name="Singla A."/>
            <person name="Starokadomskyy P."/>
            <person name="Deng Z."/>
            <person name="Osborne D.G."/>
            <person name="Li H."/>
            <person name="Dick C.J."/>
            <person name="Gomez T.S."/>
            <person name="Koenecke M."/>
            <person name="Zhang J.S."/>
            <person name="Dai H."/>
            <person name="Sifuentes-Dominguez L.F."/>
            <person name="Geng L.N."/>
            <person name="Kaufmann S.H."/>
            <person name="Hein M.Y."/>
            <person name="Wallis M."/>
            <person name="McGaughran J."/>
            <person name="Gecz J."/>
            <person name="van de Sluis B."/>
            <person name="Billadeau D.D."/>
            <person name="Burstein E."/>
        </authorList>
    </citation>
    <scope>INTERACTION WITH CCDC93</scope>
</reference>
<reference key="9">
    <citation type="journal article" date="2015" name="Proteomics">
        <title>N-terminome analysis of the human mitochondrial proteome.</title>
        <authorList>
            <person name="Vaca Jacome A.S."/>
            <person name="Rabilloud T."/>
            <person name="Schaeffer-Reiss C."/>
            <person name="Rompais M."/>
            <person name="Ayoub D."/>
            <person name="Lane L."/>
            <person name="Bairoch A."/>
            <person name="Van Dorsselaer A."/>
            <person name="Carapito C."/>
        </authorList>
    </citation>
    <scope>IDENTIFICATION BY MASS SPECTROMETRY [LARGE SCALE ANALYSIS]</scope>
</reference>
<reference key="10">
    <citation type="journal article" date="2017" name="Nat. Cell Biol.">
        <title>Retriever is a multiprotein complex for retromer-independent endosomal cargo recycling.</title>
        <authorList>
            <person name="McNally K.E."/>
            <person name="Faulkner R."/>
            <person name="Steinberg F."/>
            <person name="Gallon M."/>
            <person name="Ghai R."/>
            <person name="Pim D."/>
            <person name="Langton P."/>
            <person name="Pearson N."/>
            <person name="Danson C.M."/>
            <person name="Naegele H."/>
            <person name="Morris L.L."/>
            <person name="Singla A."/>
            <person name="Overlee B.L."/>
            <person name="Heesom K.J."/>
            <person name="Sessions R."/>
            <person name="Banks L."/>
            <person name="Collins B.M."/>
            <person name="Berger I."/>
            <person name="Billadeau D.D."/>
            <person name="Burstein E."/>
            <person name="Cullen P.J."/>
        </authorList>
    </citation>
    <scope>INTERACTION WITH CCDC22</scope>
</reference>
<reference evidence="15 16" key="11">
    <citation type="journal article" date="2023" name="Cell">
        <title>Structure of the endosomal commander complex linked to Ritscher-Schinzel syndrome.</title>
        <authorList>
            <person name="Healy M.D."/>
            <person name="McNally K.E."/>
            <person name="Butkovic R."/>
            <person name="Chilton M."/>
            <person name="Kato K."/>
            <person name="Sacharz J."/>
            <person name="McConville C."/>
            <person name="Moody E.R.R."/>
            <person name="Shaw S."/>
            <person name="Planelles-Herrero V.J."/>
            <person name="Yadav S.K.N."/>
            <person name="Ross J."/>
            <person name="Borucu U."/>
            <person name="Palmer C.S."/>
            <person name="Chen K.E."/>
            <person name="Croll T.I."/>
            <person name="Hall R.J."/>
            <person name="Caruana N.J."/>
            <person name="Ghai R."/>
            <person name="Nguyen T.H.D."/>
            <person name="Heesom K.J."/>
            <person name="Saitoh S."/>
            <person name="Berger I."/>
            <person name="Schaffitzel C."/>
            <person name="Williams T.A."/>
            <person name="Stroud D.A."/>
            <person name="Derivery E."/>
            <person name="Collins B.M."/>
            <person name="Cullen P.J."/>
        </authorList>
    </citation>
    <scope>STRUCTURE BY ELECTRON MICROSCOPY (3.12 ANGSTROMS) OF THE CCC COMPLEX</scope>
    <scope>FUNCTION</scope>
    <scope>SUBUNIT</scope>
</reference>
<reference evidence="17" key="12">
    <citation type="journal article" date="2024" name="Nat. Struct. Mol. Biol.">
        <title>Structure and interactions of the endogenous human commander complex.</title>
        <authorList>
            <person name="Laulumaa S."/>
            <person name="Kumpula E.P."/>
            <person name="Huiskonen J.T."/>
            <person name="Varjosalo M."/>
        </authorList>
    </citation>
    <scope>STRUCTURE BY ELECTRON MICROSCOPY (2.90 ANGSTROMS) OF THE CCC COMPLEX</scope>
    <scope>FUNCTION</scope>
    <scope>SUBUNIT</scope>
</reference>
<protein>
    <recommendedName>
        <fullName>COMM domain-containing protein 2</fullName>
    </recommendedName>
</protein>
<evidence type="ECO:0000255" key="1">
    <source>
        <dbReference type="PROSITE-ProRule" id="PRU00602"/>
    </source>
</evidence>
<evidence type="ECO:0000269" key="2">
    <source>
    </source>
</evidence>
<evidence type="ECO:0000269" key="3">
    <source>
    </source>
</evidence>
<evidence type="ECO:0000269" key="4">
    <source>
    </source>
</evidence>
<evidence type="ECO:0000269" key="5">
    <source>
    </source>
</evidence>
<evidence type="ECO:0000269" key="6">
    <source>
    </source>
</evidence>
<evidence type="ECO:0000269" key="7">
    <source>
    </source>
</evidence>
<evidence type="ECO:0000269" key="8">
    <source>
    </source>
</evidence>
<evidence type="ECO:0000269" key="9">
    <source>
    </source>
</evidence>
<evidence type="ECO:0000269" key="10">
    <source>
    </source>
</evidence>
<evidence type="ECO:0000269" key="11">
    <source>
    </source>
</evidence>
<evidence type="ECO:0000303" key="12">
    <source>
    </source>
</evidence>
<evidence type="ECO:0000305" key="13"/>
<evidence type="ECO:0000305" key="14">
    <source>
    </source>
</evidence>
<evidence type="ECO:0007744" key="15">
    <source>
        <dbReference type="PDB" id="8F2R"/>
    </source>
</evidence>
<evidence type="ECO:0007744" key="16">
    <source>
        <dbReference type="PDB" id="8F2U"/>
    </source>
</evidence>
<evidence type="ECO:0007744" key="17">
    <source>
        <dbReference type="PDB" id="8P0W"/>
    </source>
</evidence>
<evidence type="ECO:0007829" key="18">
    <source>
        <dbReference type="PDB" id="8P0W"/>
    </source>
</evidence>
<accession>Q86X83</accession>
<accession>Q561V4</accession>
<accession>Q9H3L5</accession>
<accession>Q9Y5V1</accession>
<feature type="chain" id="PRO_0000077386" description="COMM domain-containing protein 2">
    <location>
        <begin position="1"/>
        <end position="199"/>
    </location>
</feature>
<feature type="domain" description="COMM" evidence="1">
    <location>
        <begin position="123"/>
        <end position="190"/>
    </location>
</feature>
<feature type="splice variant" id="VSP_055533" description="In isoform 2." evidence="12">
    <original>QTDPATLLHLVQQLEQALEEMKTNHCRRVVRNIK</original>
    <variation>GLQA</variation>
    <location>
        <begin position="166"/>
        <end position="199"/>
    </location>
</feature>
<feature type="sequence variant" id="VAR_028010" description="In dbSNP:rs9843784." evidence="2 3 4">
    <original>I</original>
    <variation>L</variation>
    <location>
        <position position="113"/>
    </location>
</feature>
<feature type="sequence variant" id="VAR_028011" description="In dbSNP:rs1546732.">
    <original>Q</original>
    <variation>H</variation>
    <location>
        <position position="177"/>
    </location>
</feature>
<feature type="sequence conflict" description="In Ref. 3; AAD39913." evidence="13" ref="3">
    <original>K</original>
    <variation>Q</variation>
    <location>
        <position position="199"/>
    </location>
</feature>
<feature type="helix" evidence="18">
    <location>
        <begin position="7"/>
        <end position="13"/>
    </location>
</feature>
<feature type="helix" evidence="18">
    <location>
        <begin position="14"/>
        <end position="18"/>
    </location>
</feature>
<feature type="helix" evidence="18">
    <location>
        <begin position="21"/>
        <end position="37"/>
    </location>
</feature>
<feature type="helix" evidence="18">
    <location>
        <begin position="42"/>
        <end position="51"/>
    </location>
</feature>
<feature type="helix" evidence="18">
    <location>
        <begin position="55"/>
        <end position="75"/>
    </location>
</feature>
<feature type="helix" evidence="18">
    <location>
        <begin position="79"/>
        <end position="86"/>
    </location>
</feature>
<feature type="helix" evidence="18">
    <location>
        <begin position="93"/>
        <end position="114"/>
    </location>
</feature>
<feature type="helix" evidence="18">
    <location>
        <begin position="115"/>
        <end position="117"/>
    </location>
</feature>
<feature type="strand" evidence="18">
    <location>
        <begin position="123"/>
        <end position="139"/>
    </location>
</feature>
<feature type="strand" evidence="18">
    <location>
        <begin position="145"/>
        <end position="156"/>
    </location>
</feature>
<feature type="strand" evidence="18">
    <location>
        <begin position="159"/>
        <end position="167"/>
    </location>
</feature>
<feature type="helix" evidence="18">
    <location>
        <begin position="169"/>
        <end position="185"/>
    </location>
</feature>
<feature type="helix" evidence="18">
    <location>
        <begin position="189"/>
        <end position="197"/>
    </location>
</feature>
<comment type="function">
    <text evidence="4 10 11 14">Scaffold protein in the commander complex that is essential for endosomal recycling of transmembrane cargos; the commander complex is composed of the CCC subcomplex and the retriever subcomplex (PubMed:37172566, PubMed:38459129). May modulate activity of cullin-RING E3 ubiquitin ligase (CRL) complexes (PubMed:21778237). May down-regulate activation of NF-kappa-B (PubMed:15799966).</text>
</comment>
<comment type="subunit">
    <text evidence="4 5 6 7 8 9 10 11">Component of the commander complex consisting of the CCC subcomplex and the retriever subcomplex (PubMed:37172566, PubMed:38459129, PubMed:25355947, PubMed:28892079, PubMed:15799966). Component of the CCC (COMMD/CCDC22/CCDC93) subcomplex consisting of COMMD1, COMMD2, COMMD3, COMMD4, COMMD5, COMMD6, COMMD7, COMMD8, COMMD9, COMMD10, CCDC22 and CCDC93; within the complex forms a heterodimer with COMMD3 (PubMed:37172566, PubMed:38459129, PubMed:15799966, PubMed:23563313, PubMed:25355947, PubMed:28892079). Interacts with RELA, RELB, NFKB1/p105, NFKB2/p100. Interacts with CCDC22, CCDC93, SCNN1B, CUL3, CUL4B, CUL5, CUL7 (PubMed:15799966, PubMed:21778237, PubMed:23563313, PubMed:23637203, PubMed:25355947, PubMed:28892079).</text>
</comment>
<comment type="interaction">
    <interactant intactId="EBI-1550220">
        <id>Q86X83</id>
    </interactant>
    <interactant intactId="EBI-3943153">
        <id>O60826</id>
        <label>CCDC22</label>
    </interactant>
    <organismsDiffer>false</organismsDiffer>
    <experiments>14</experiments>
</comment>
<comment type="interaction">
    <interactant intactId="EBI-1550220">
        <id>Q86X83</id>
    </interactant>
    <interactant intactId="EBI-1104769">
        <id>Q567U6</id>
        <label>CCDC93</label>
    </interactant>
    <organismsDiffer>false</organismsDiffer>
    <experiments>7</experiments>
</comment>
<comment type="interaction">
    <interactant intactId="EBI-1550220">
        <id>Q86X83</id>
    </interactant>
    <interactant intactId="EBI-1550112">
        <id>Q8N668</id>
        <label>COMMD1</label>
    </interactant>
    <organismsDiffer>false</organismsDiffer>
    <experiments>9</experiments>
</comment>
<comment type="interaction">
    <interactant intactId="EBI-1550220">
        <id>Q86X83</id>
    </interactant>
    <interactant intactId="EBI-714979">
        <id>Q9UBI1</id>
        <label>COMMD3</label>
    </interactant>
    <organismsDiffer>false</organismsDiffer>
    <experiments>10</experiments>
</comment>
<comment type="interaction">
    <interactant intactId="EBI-1550220">
        <id>Q86X83</id>
    </interactant>
    <interactant intactId="EBI-5235340">
        <id>Q7Z699</id>
        <label>SPRED1</label>
    </interactant>
    <organismsDiffer>false</organismsDiffer>
    <experiments>3</experiments>
</comment>
<comment type="subcellular location">
    <subcellularLocation>
        <location evidence="5">Cytoplasm</location>
    </subcellularLocation>
</comment>
<comment type="alternative products">
    <event type="alternative splicing"/>
    <isoform>
        <id>Q86X83-1</id>
        <name>1</name>
        <sequence type="displayed"/>
    </isoform>
    <isoform>
        <id>Q86X83-2</id>
        <name>2</name>
        <sequence type="described" ref="VSP_055533"/>
    </isoform>
</comment>
<comment type="tissue specificity">
    <text evidence="4">Ubiquitous.</text>
</comment>
<comment type="similarity">
    <text evidence="13">Belongs to the COMM domain-containing protein 2 family.</text>
</comment>
<comment type="sequence caution" evidence="13">
    <conflict type="frameshift">
        <sequence resource="EMBL-CDS" id="AAD39913"/>
    </conflict>
</comment>